<sequence length="321" mass="36748">MKEDCLPSSHVPISDSKSIQKSELLGLLKTYNCYHEGKSFQLRHREEEGTLIIEGLLNIAWGLRRPIRLQMQDDREQVHLPSTSWMPRRPSCPLKEPSPQNGNITAQGPSIQPVHKAESSTDSSGPLEEAEEAPQLMRTKSDASCMSQRRPKCRAPGEAQRIRRHRFSINGHFYNHKTSVFTPAYGSVTNVRVNSTMTTLQVLTLLLNKFRVEDGPSEFALYIVHESGERTKLKDCEYPLISRILHGPCEKIARIFLMEADLGVEVPHEVAQYIKFEMPVLDSFVEKLKEEEEREIIKLTMKFQALRLTMLQRLEQLVEAK</sequence>
<feature type="chain" id="PRO_0000240398" description="Ras association domain-containing protein 4">
    <location>
        <begin position="1"/>
        <end position="321"/>
    </location>
</feature>
<feature type="domain" description="Ras-associating" evidence="2">
    <location>
        <begin position="174"/>
        <end position="262"/>
    </location>
</feature>
<feature type="domain" description="SARAH" evidence="3">
    <location>
        <begin position="270"/>
        <end position="317"/>
    </location>
</feature>
<feature type="region of interest" description="Disordered" evidence="4">
    <location>
        <begin position="79"/>
        <end position="159"/>
    </location>
</feature>
<feature type="compositionally biased region" description="Polar residues" evidence="4">
    <location>
        <begin position="98"/>
        <end position="110"/>
    </location>
</feature>
<feature type="modified residue" description="Phosphoserine" evidence="1">
    <location>
        <position position="141"/>
    </location>
</feature>
<feature type="splice variant" id="VSP_019355" description="In isoform 3." evidence="6">
    <location>
        <begin position="1"/>
        <end position="70"/>
    </location>
</feature>
<feature type="splice variant" id="VSP_019356" description="In isoform 2." evidence="6">
    <location>
        <begin position="29"/>
        <end position="46"/>
    </location>
</feature>
<feature type="splice variant" id="VSP_019357" description="In isoform 2." evidence="6">
    <original>L</original>
    <variation>LGCWSLLLGLSSLSLPAAISALQLSVFR</variation>
    <location>
        <position position="94"/>
    </location>
</feature>
<feature type="splice variant" id="VSP_019358" description="In isoform 4." evidence="6">
    <original>KEPSPQNGNITAQGPSIQPVHKAESSTDSSGP</original>
    <variation>APGGGRGGPPADADQERRQLHEPEEAQ</variation>
    <location>
        <begin position="95"/>
        <end position="126"/>
    </location>
</feature>
<feature type="splice variant" id="VSP_019359" description="In isoform 4." evidence="6">
    <location>
        <begin position="127"/>
        <end position="321"/>
    </location>
</feature>
<feature type="sequence variant" id="VAR_034438" description="In dbSNP:rs34692238.">
    <original>H</original>
    <variation>Y</variation>
    <location>
        <position position="10"/>
    </location>
</feature>
<feature type="sequence variant" id="VAR_034439" description="In dbSNP:rs870957.">
    <original>R</original>
    <variation>G</variation>
    <location>
        <position position="88"/>
    </location>
</feature>
<feature type="sequence conflict" description="In Ref. 1; AAG44666 and 2; AAO61138." evidence="7" ref="1 2">
    <original>Q</original>
    <variation>K</variation>
    <location>
        <position position="107"/>
    </location>
</feature>
<organism>
    <name type="scientific">Homo sapiens</name>
    <name type="common">Human</name>
    <dbReference type="NCBI Taxonomy" id="9606"/>
    <lineage>
        <taxon>Eukaryota</taxon>
        <taxon>Metazoa</taxon>
        <taxon>Chordata</taxon>
        <taxon>Craniata</taxon>
        <taxon>Vertebrata</taxon>
        <taxon>Euteleostomi</taxon>
        <taxon>Mammalia</taxon>
        <taxon>Eutheria</taxon>
        <taxon>Euarchontoglires</taxon>
        <taxon>Primates</taxon>
        <taxon>Haplorrhini</taxon>
        <taxon>Catarrhini</taxon>
        <taxon>Hominidae</taxon>
        <taxon>Homo</taxon>
    </lineage>
</organism>
<keyword id="KW-0025">Alternative splicing</keyword>
<keyword id="KW-0131">Cell cycle</keyword>
<keyword id="KW-0597">Phosphoprotein</keyword>
<keyword id="KW-1267">Proteomics identification</keyword>
<keyword id="KW-1185">Reference proteome</keyword>
<keyword id="KW-0043">Tumor suppressor</keyword>
<accession>Q9H2L5</accession>
<accession>Q86WH5</accession>
<accession>Q86WH6</accession>
<accession>Q86WH7</accession>
<accession>Q8N5A9</accession>
<accession>Q8TCK6</accession>
<comment type="function">
    <text evidence="5">Potential tumor suppressor. May act as a KRAS effector protein. May promote apoptosis and cell cycle arrest.</text>
</comment>
<comment type="subunit">
    <text evidence="5">Interacts directly with activated KRAS in a GTP-dependent manner.</text>
</comment>
<comment type="interaction">
    <interactant intactId="EBI-2933362">
        <id>Q9H2L5</id>
    </interactant>
    <interactant intactId="EBI-1003700">
        <id>Q9H3R5</id>
        <label>CENPH</label>
    </interactant>
    <organismsDiffer>false</organismsDiffer>
    <experiments>3</experiments>
</comment>
<comment type="interaction">
    <interactant intactId="EBI-2933362">
        <id>Q9H2L5</id>
    </interactant>
    <interactant intactId="EBI-740220">
        <id>O14964</id>
        <label>HGS</label>
    </interactant>
    <organismsDiffer>false</organismsDiffer>
    <experiments>3</experiments>
</comment>
<comment type="interaction">
    <interactant intactId="EBI-2933362">
        <id>Q9H2L5</id>
    </interactant>
    <interactant intactId="EBI-9091197">
        <id>Q8IY31-3</id>
        <label>IFT20</label>
    </interactant>
    <organismsDiffer>false</organismsDiffer>
    <experiments>3</experiments>
</comment>
<comment type="interaction">
    <interactant intactId="EBI-2933362">
        <id>Q9H2L5</id>
    </interactant>
    <interactant intactId="EBI-1045155">
        <id>P43360</id>
        <label>MAGEA6</label>
    </interactant>
    <organismsDiffer>false</organismsDiffer>
    <experiments>6</experiments>
</comment>
<comment type="interaction">
    <interactant intactId="EBI-2933362">
        <id>Q9H2L5</id>
    </interactant>
    <interactant intactId="EBI-992580">
        <id>Q13188</id>
        <label>STK3</label>
    </interactant>
    <organismsDiffer>false</organismsDiffer>
    <experiments>11</experiments>
</comment>
<comment type="interaction">
    <interactant intactId="EBI-2933362">
        <id>Q9H2L5</id>
    </interactant>
    <interactant intactId="EBI-367376">
        <id>Q13043</id>
        <label>STK4</label>
    </interactant>
    <organismsDiffer>false</organismsDiffer>
    <experiments>7</experiments>
</comment>
<comment type="alternative products">
    <event type="alternative splicing"/>
    <isoform>
        <id>Q9H2L5-1</id>
        <name>1</name>
        <name>A</name>
        <sequence type="displayed"/>
    </isoform>
    <isoform>
        <id>Q9H2L5-2</id>
        <name>2</name>
        <name>C</name>
        <sequence type="described" ref="VSP_019356 VSP_019357"/>
    </isoform>
    <isoform>
        <id>Q9H2L5-3</id>
        <name>3</name>
        <name>B</name>
        <sequence type="described" ref="VSP_019355"/>
    </isoform>
    <isoform>
        <id>Q9H2L5-4</id>
        <name>4</name>
        <name>D</name>
        <sequence type="described" ref="VSP_019358 VSP_019359"/>
    </isoform>
</comment>
<comment type="tissue specificity">
    <text evidence="5">Widely expressed. Frequently down-regulated in tumor cell lines.</text>
</comment>
<protein>
    <recommendedName>
        <fullName>Ras association domain-containing protein 4</fullName>
    </recommendedName>
</protein>
<evidence type="ECO:0000250" key="1">
    <source>
        <dbReference type="UniProtKB" id="Q8CB96"/>
    </source>
</evidence>
<evidence type="ECO:0000255" key="2">
    <source>
        <dbReference type="PROSITE-ProRule" id="PRU00166"/>
    </source>
</evidence>
<evidence type="ECO:0000255" key="3">
    <source>
        <dbReference type="PROSITE-ProRule" id="PRU00310"/>
    </source>
</evidence>
<evidence type="ECO:0000256" key="4">
    <source>
        <dbReference type="SAM" id="MobiDB-lite"/>
    </source>
</evidence>
<evidence type="ECO:0000269" key="5">
    <source>
    </source>
</evidence>
<evidence type="ECO:0000303" key="6">
    <source ref="1"/>
</evidence>
<evidence type="ECO:0000305" key="7"/>
<reference key="1">
    <citation type="submission" date="2003-01" db="EMBL/GenBank/DDBJ databases">
        <title>RASSF4 (AD037) is transcriptionally repressed by an epigenetic mechanism in ovarian cancer cell lines.</title>
        <authorList>
            <person name="Burbee D.G."/>
            <person name="White M.A."/>
            <person name="Miller D.S."/>
            <person name="Muller C.Y."/>
            <person name="Minna J.D."/>
        </authorList>
    </citation>
    <scope>NUCLEOTIDE SEQUENCE [MRNA] (ISOFORMS 1; 2; 3 AND 4)</scope>
</reference>
<reference key="2">
    <citation type="submission" date="2000-05" db="EMBL/GenBank/DDBJ databases">
        <authorList>
            <person name="Xu X."/>
            <person name="Yang Y."/>
            <person name="Gao G."/>
            <person name="Xiao H."/>
            <person name="Chen Z."/>
            <person name="Han Z."/>
        </authorList>
    </citation>
    <scope>NUCLEOTIDE SEQUENCE [LARGE SCALE MRNA] (ISOFORM 1)</scope>
    <source>
        <tissue>Adrenal gland</tissue>
    </source>
</reference>
<reference key="3">
    <citation type="journal article" date="2004" name="Nature">
        <title>The DNA sequence and comparative analysis of human chromosome 10.</title>
        <authorList>
            <person name="Deloukas P."/>
            <person name="Earthrowl M.E."/>
            <person name="Grafham D.V."/>
            <person name="Rubenfield M."/>
            <person name="French L."/>
            <person name="Steward C.A."/>
            <person name="Sims S.K."/>
            <person name="Jones M.C."/>
            <person name="Searle S."/>
            <person name="Scott C."/>
            <person name="Howe K."/>
            <person name="Hunt S.E."/>
            <person name="Andrews T.D."/>
            <person name="Gilbert J.G.R."/>
            <person name="Swarbreck D."/>
            <person name="Ashurst J.L."/>
            <person name="Taylor A."/>
            <person name="Battles J."/>
            <person name="Bird C.P."/>
            <person name="Ainscough R."/>
            <person name="Almeida J.P."/>
            <person name="Ashwell R.I.S."/>
            <person name="Ambrose K.D."/>
            <person name="Babbage A.K."/>
            <person name="Bagguley C.L."/>
            <person name="Bailey J."/>
            <person name="Banerjee R."/>
            <person name="Bates K."/>
            <person name="Beasley H."/>
            <person name="Bray-Allen S."/>
            <person name="Brown A.J."/>
            <person name="Brown J.Y."/>
            <person name="Burford D.C."/>
            <person name="Burrill W."/>
            <person name="Burton J."/>
            <person name="Cahill P."/>
            <person name="Camire D."/>
            <person name="Carter N.P."/>
            <person name="Chapman J.C."/>
            <person name="Clark S.Y."/>
            <person name="Clarke G."/>
            <person name="Clee C.M."/>
            <person name="Clegg S."/>
            <person name="Corby N."/>
            <person name="Coulson A."/>
            <person name="Dhami P."/>
            <person name="Dutta I."/>
            <person name="Dunn M."/>
            <person name="Faulkner L."/>
            <person name="Frankish A."/>
            <person name="Frankland J.A."/>
            <person name="Garner P."/>
            <person name="Garnett J."/>
            <person name="Gribble S."/>
            <person name="Griffiths C."/>
            <person name="Grocock R."/>
            <person name="Gustafson E."/>
            <person name="Hammond S."/>
            <person name="Harley J.L."/>
            <person name="Hart E."/>
            <person name="Heath P.D."/>
            <person name="Ho T.P."/>
            <person name="Hopkins B."/>
            <person name="Horne J."/>
            <person name="Howden P.J."/>
            <person name="Huckle E."/>
            <person name="Hynds C."/>
            <person name="Johnson C."/>
            <person name="Johnson D."/>
            <person name="Kana A."/>
            <person name="Kay M."/>
            <person name="Kimberley A.M."/>
            <person name="Kershaw J.K."/>
            <person name="Kokkinaki M."/>
            <person name="Laird G.K."/>
            <person name="Lawlor S."/>
            <person name="Lee H.M."/>
            <person name="Leongamornlert D.A."/>
            <person name="Laird G."/>
            <person name="Lloyd C."/>
            <person name="Lloyd D.M."/>
            <person name="Loveland J."/>
            <person name="Lovell J."/>
            <person name="McLaren S."/>
            <person name="McLay K.E."/>
            <person name="McMurray A."/>
            <person name="Mashreghi-Mohammadi M."/>
            <person name="Matthews L."/>
            <person name="Milne S."/>
            <person name="Nickerson T."/>
            <person name="Nguyen M."/>
            <person name="Overton-Larty E."/>
            <person name="Palmer S.A."/>
            <person name="Pearce A.V."/>
            <person name="Peck A.I."/>
            <person name="Pelan S."/>
            <person name="Phillimore B."/>
            <person name="Porter K."/>
            <person name="Rice C.M."/>
            <person name="Rogosin A."/>
            <person name="Ross M.T."/>
            <person name="Sarafidou T."/>
            <person name="Sehra H.K."/>
            <person name="Shownkeen R."/>
            <person name="Skuce C.D."/>
            <person name="Smith M."/>
            <person name="Standring L."/>
            <person name="Sycamore N."/>
            <person name="Tester J."/>
            <person name="Thorpe A."/>
            <person name="Torcasso W."/>
            <person name="Tracey A."/>
            <person name="Tromans A."/>
            <person name="Tsolas J."/>
            <person name="Wall M."/>
            <person name="Walsh J."/>
            <person name="Wang H."/>
            <person name="Weinstock K."/>
            <person name="West A.P."/>
            <person name="Willey D.L."/>
            <person name="Whitehead S.L."/>
            <person name="Wilming L."/>
            <person name="Wray P.W."/>
            <person name="Young L."/>
            <person name="Chen Y."/>
            <person name="Lovering R.C."/>
            <person name="Moschonas N.K."/>
            <person name="Siebert R."/>
            <person name="Fechtel K."/>
            <person name="Bentley D."/>
            <person name="Durbin R.M."/>
            <person name="Hubbard T."/>
            <person name="Doucette-Stamm L."/>
            <person name="Beck S."/>
            <person name="Smith D.R."/>
            <person name="Rogers J."/>
        </authorList>
    </citation>
    <scope>NUCLEOTIDE SEQUENCE [LARGE SCALE GENOMIC DNA]</scope>
</reference>
<reference key="4">
    <citation type="journal article" date="2004" name="Genome Res.">
        <title>The status, quality, and expansion of the NIH full-length cDNA project: the Mammalian Gene Collection (MGC).</title>
        <authorList>
            <consortium name="The MGC Project Team"/>
        </authorList>
    </citation>
    <scope>NUCLEOTIDE SEQUENCE [LARGE SCALE MRNA] (ISOFORM 1)</scope>
    <source>
        <tissue>Skin</tissue>
    </source>
</reference>
<reference key="5">
    <citation type="journal article" date="2007" name="BMC Genomics">
        <title>The full-ORF clone resource of the German cDNA consortium.</title>
        <authorList>
            <person name="Bechtel S."/>
            <person name="Rosenfelder H."/>
            <person name="Duda A."/>
            <person name="Schmidt C.P."/>
            <person name="Ernst U."/>
            <person name="Wellenreuther R."/>
            <person name="Mehrle A."/>
            <person name="Schuster C."/>
            <person name="Bahr A."/>
            <person name="Bloecker H."/>
            <person name="Heubner D."/>
            <person name="Hoerlein A."/>
            <person name="Michel G."/>
            <person name="Wedler H."/>
            <person name="Koehrer K."/>
            <person name="Ottenwaelder B."/>
            <person name="Poustka A."/>
            <person name="Wiemann S."/>
            <person name="Schupp I."/>
        </authorList>
    </citation>
    <scope>NUCLEOTIDE SEQUENCE [LARGE SCALE MRNA] OF 232-321</scope>
    <source>
        <tissue>Lymph node</tissue>
    </source>
</reference>
<reference key="6">
    <citation type="journal article" date="2004" name="Cancer Res.">
        <title>RASSF4/AD037 is a potential ras effector/tumor suppressor of the RASSF family.</title>
        <authorList>
            <person name="Eckfeld K."/>
            <person name="Hesson L."/>
            <person name="Vos M.D."/>
            <person name="Bieche I."/>
            <person name="Latif F."/>
            <person name="Clark G.J."/>
        </authorList>
    </citation>
    <scope>FUNCTION</scope>
    <scope>TISSUE SPECIFICITY</scope>
    <scope>INTERACTION WITH KRAS</scope>
</reference>
<name>RASF4_HUMAN</name>
<dbReference type="EMBL" id="AY216713">
    <property type="protein sequence ID" value="AAO61138.1"/>
    <property type="molecule type" value="mRNA"/>
</dbReference>
<dbReference type="EMBL" id="AY216714">
    <property type="protein sequence ID" value="AAO61139.1"/>
    <property type="molecule type" value="mRNA"/>
</dbReference>
<dbReference type="EMBL" id="AY216715">
    <property type="protein sequence ID" value="AAO61140.1"/>
    <property type="molecule type" value="mRNA"/>
</dbReference>
<dbReference type="EMBL" id="AY216716">
    <property type="protein sequence ID" value="AAO61141.1"/>
    <property type="molecule type" value="mRNA"/>
</dbReference>
<dbReference type="EMBL" id="AF260335">
    <property type="protein sequence ID" value="AAG44666.1"/>
    <property type="molecule type" value="mRNA"/>
</dbReference>
<dbReference type="EMBL" id="AL353801">
    <property type="status" value="NOT_ANNOTATED_CDS"/>
    <property type="molecule type" value="Genomic_DNA"/>
</dbReference>
<dbReference type="EMBL" id="BC032593">
    <property type="protein sequence ID" value="AAH32593.1"/>
    <property type="molecule type" value="mRNA"/>
</dbReference>
<dbReference type="EMBL" id="AL713716">
    <property type="protein sequence ID" value="CAD28511.1"/>
    <property type="molecule type" value="mRNA"/>
</dbReference>
<dbReference type="CCDS" id="CCDS7208.1">
    <molecule id="Q9H2L5-1"/>
</dbReference>
<dbReference type="RefSeq" id="NP_114412.2">
    <molecule id="Q9H2L5-1"/>
    <property type="nucleotide sequence ID" value="NM_032023.3"/>
</dbReference>
<dbReference type="BioGRID" id="123820">
    <property type="interactions" value="8"/>
</dbReference>
<dbReference type="FunCoup" id="Q9H2L5">
    <property type="interactions" value="563"/>
</dbReference>
<dbReference type="IntAct" id="Q9H2L5">
    <property type="interactions" value="10"/>
</dbReference>
<dbReference type="MINT" id="Q9H2L5"/>
<dbReference type="STRING" id="9606.ENSP00000339692"/>
<dbReference type="iPTMnet" id="Q9H2L5"/>
<dbReference type="PhosphoSitePlus" id="Q9H2L5"/>
<dbReference type="BioMuta" id="RASSF4"/>
<dbReference type="DMDM" id="109892952"/>
<dbReference type="jPOST" id="Q9H2L5"/>
<dbReference type="MassIVE" id="Q9H2L5"/>
<dbReference type="PaxDb" id="9606-ENSP00000339692"/>
<dbReference type="PeptideAtlas" id="Q9H2L5"/>
<dbReference type="ProteomicsDB" id="80562">
    <molecule id="Q9H2L5-1"/>
</dbReference>
<dbReference type="ProteomicsDB" id="80563">
    <molecule id="Q9H2L5-2"/>
</dbReference>
<dbReference type="ProteomicsDB" id="80564">
    <molecule id="Q9H2L5-3"/>
</dbReference>
<dbReference type="ProteomicsDB" id="80565">
    <molecule id="Q9H2L5-4"/>
</dbReference>
<dbReference type="Antibodypedia" id="26967">
    <property type="antibodies" value="177 antibodies from 28 providers"/>
</dbReference>
<dbReference type="DNASU" id="83937"/>
<dbReference type="Ensembl" id="ENST00000340258.10">
    <molecule id="Q9H2L5-1"/>
    <property type="protein sequence ID" value="ENSP00000339692.4"/>
    <property type="gene ID" value="ENSG00000107551.21"/>
</dbReference>
<dbReference type="GeneID" id="83937"/>
<dbReference type="KEGG" id="hsa:83937"/>
<dbReference type="MANE-Select" id="ENST00000340258.10">
    <property type="protein sequence ID" value="ENSP00000339692.4"/>
    <property type="RefSeq nucleotide sequence ID" value="NM_032023.4"/>
    <property type="RefSeq protein sequence ID" value="NP_114412.2"/>
</dbReference>
<dbReference type="UCSC" id="uc001jbo.4">
    <molecule id="Q9H2L5-1"/>
    <property type="organism name" value="human"/>
</dbReference>
<dbReference type="AGR" id="HGNC:20793"/>
<dbReference type="CTD" id="83937"/>
<dbReference type="DisGeNET" id="83937"/>
<dbReference type="GeneCards" id="RASSF4"/>
<dbReference type="HGNC" id="HGNC:20793">
    <property type="gene designation" value="RASSF4"/>
</dbReference>
<dbReference type="HPA" id="ENSG00000107551">
    <property type="expression patterns" value="Tissue enhanced (kidney)"/>
</dbReference>
<dbReference type="MIM" id="610559">
    <property type="type" value="gene"/>
</dbReference>
<dbReference type="neXtProt" id="NX_Q9H2L5"/>
<dbReference type="OpenTargets" id="ENSG00000107551"/>
<dbReference type="PharmGKB" id="PA134951366"/>
<dbReference type="VEuPathDB" id="HostDB:ENSG00000107551"/>
<dbReference type="eggNOG" id="KOG4239">
    <property type="taxonomic scope" value="Eukaryota"/>
</dbReference>
<dbReference type="GeneTree" id="ENSGT00940000160176"/>
<dbReference type="HOGENOM" id="CLU_018893_1_0_1"/>
<dbReference type="InParanoid" id="Q9H2L5"/>
<dbReference type="OMA" id="RMCERQT"/>
<dbReference type="OrthoDB" id="9976881at2759"/>
<dbReference type="PAN-GO" id="Q9H2L5">
    <property type="GO annotations" value="1 GO annotation based on evolutionary models"/>
</dbReference>
<dbReference type="PhylomeDB" id="Q9H2L5"/>
<dbReference type="TreeFam" id="TF319243"/>
<dbReference type="PathwayCommons" id="Q9H2L5"/>
<dbReference type="SignaLink" id="Q9H2L5"/>
<dbReference type="BioGRID-ORCS" id="83937">
    <property type="hits" value="16 hits in 1161 CRISPR screens"/>
</dbReference>
<dbReference type="ChiTaRS" id="RASSF4">
    <property type="organism name" value="human"/>
</dbReference>
<dbReference type="GenomeRNAi" id="83937"/>
<dbReference type="Pharos" id="Q9H2L5">
    <property type="development level" value="Tbio"/>
</dbReference>
<dbReference type="PRO" id="PR:Q9H2L5"/>
<dbReference type="Proteomes" id="UP000005640">
    <property type="component" value="Chromosome 10"/>
</dbReference>
<dbReference type="RNAct" id="Q9H2L5">
    <property type="molecule type" value="protein"/>
</dbReference>
<dbReference type="Bgee" id="ENSG00000107551">
    <property type="expression patterns" value="Expressed in right lobe of thyroid gland and 180 other cell types or tissues"/>
</dbReference>
<dbReference type="ExpressionAtlas" id="Q9H2L5">
    <property type="expression patterns" value="baseline and differential"/>
</dbReference>
<dbReference type="GO" id="GO:0007165">
    <property type="term" value="P:signal transduction"/>
    <property type="evidence" value="ECO:0000318"/>
    <property type="project" value="GO_Central"/>
</dbReference>
<dbReference type="CDD" id="cd17222">
    <property type="entry name" value="RA_RASSF4"/>
    <property type="match status" value="1"/>
</dbReference>
<dbReference type="CDD" id="cd21894">
    <property type="entry name" value="SARAH_RASSF4"/>
    <property type="match status" value="1"/>
</dbReference>
<dbReference type="Gene3D" id="3.10.20.90">
    <property type="entry name" value="Phosphatidylinositol 3-kinase Catalytic Subunit, Chain A, domain 1"/>
    <property type="match status" value="1"/>
</dbReference>
<dbReference type="InterPro" id="IPR000159">
    <property type="entry name" value="RA_dom"/>
</dbReference>
<dbReference type="InterPro" id="IPR033614">
    <property type="entry name" value="RASSF1-6"/>
</dbReference>
<dbReference type="InterPro" id="IPR033622">
    <property type="entry name" value="RASSF4_RA"/>
</dbReference>
<dbReference type="InterPro" id="IPR011524">
    <property type="entry name" value="SARAH_dom"/>
</dbReference>
<dbReference type="InterPro" id="IPR029071">
    <property type="entry name" value="Ubiquitin-like_domsf"/>
</dbReference>
<dbReference type="PANTHER" id="PTHR22738:SF4">
    <property type="entry name" value="RAS ASSOCIATION DOMAIN-CONTAINING PROTEIN 4"/>
    <property type="match status" value="1"/>
</dbReference>
<dbReference type="PANTHER" id="PTHR22738">
    <property type="entry name" value="RASSF"/>
    <property type="match status" value="1"/>
</dbReference>
<dbReference type="Pfam" id="PF16517">
    <property type="entry name" value="Nore1-SARAH"/>
    <property type="match status" value="1"/>
</dbReference>
<dbReference type="Pfam" id="PF00788">
    <property type="entry name" value="RA"/>
    <property type="match status" value="1"/>
</dbReference>
<dbReference type="SMART" id="SM00314">
    <property type="entry name" value="RA"/>
    <property type="match status" value="1"/>
</dbReference>
<dbReference type="SUPFAM" id="SSF54236">
    <property type="entry name" value="Ubiquitin-like"/>
    <property type="match status" value="1"/>
</dbReference>
<dbReference type="PROSITE" id="PS50200">
    <property type="entry name" value="RA"/>
    <property type="match status" value="1"/>
</dbReference>
<dbReference type="PROSITE" id="PS50951">
    <property type="entry name" value="SARAH"/>
    <property type="match status" value="1"/>
</dbReference>
<gene>
    <name type="primary">RASSF4</name>
    <name type="ORF">AD037</name>
</gene>
<proteinExistence type="evidence at protein level"/>